<gene>
    <name evidence="1" type="primary">crl</name>
    <name type="ordered locus">SNSL254_A0358</name>
</gene>
<reference key="1">
    <citation type="journal article" date="2011" name="J. Bacteriol.">
        <title>Comparative genomics of 28 Salmonella enterica isolates: evidence for CRISPR-mediated adaptive sublineage evolution.</title>
        <authorList>
            <person name="Fricke W.F."/>
            <person name="Mammel M.K."/>
            <person name="McDermott P.F."/>
            <person name="Tartera C."/>
            <person name="White D.G."/>
            <person name="Leclerc J.E."/>
            <person name="Ravel J."/>
            <person name="Cebula T.A."/>
        </authorList>
    </citation>
    <scope>NUCLEOTIDE SEQUENCE [LARGE SCALE GENOMIC DNA]</scope>
    <source>
        <strain>SL254</strain>
    </source>
</reference>
<sequence length="133" mass="15769">MTLPSGHPKSRLIKKFTALGPYIREGQCEDNRFFFDCLAVCVNVKPAPEKREFWGWWMELEAQEKRFTYRYQFGLFDKEGNWTAVPINETEVVERLEYTLREFHEKLRDLLISMELALEPSDDFNDEPVKLSA</sequence>
<organism>
    <name type="scientific">Salmonella newport (strain SL254)</name>
    <dbReference type="NCBI Taxonomy" id="423368"/>
    <lineage>
        <taxon>Bacteria</taxon>
        <taxon>Pseudomonadati</taxon>
        <taxon>Pseudomonadota</taxon>
        <taxon>Gammaproteobacteria</taxon>
        <taxon>Enterobacterales</taxon>
        <taxon>Enterobacteriaceae</taxon>
        <taxon>Salmonella</taxon>
    </lineage>
</organism>
<keyword id="KW-0010">Activator</keyword>
<keyword id="KW-0175">Coiled coil</keyword>
<keyword id="KW-0963">Cytoplasm</keyword>
<keyword id="KW-0804">Transcription</keyword>
<keyword id="KW-0805">Transcription regulation</keyword>
<feature type="chain" id="PRO_1000138148" description="Sigma factor-binding protein Crl">
    <location>
        <begin position="1"/>
        <end position="133"/>
    </location>
</feature>
<feature type="region of interest" description="Essential for activity" evidence="1">
    <location>
        <begin position="99"/>
        <end position="122"/>
    </location>
</feature>
<feature type="coiled-coil region" evidence="1">
    <location>
        <begin position="90"/>
        <end position="111"/>
    </location>
</feature>
<evidence type="ECO:0000255" key="1">
    <source>
        <dbReference type="HAMAP-Rule" id="MF_01178"/>
    </source>
</evidence>
<accession>B4SVW1</accession>
<protein>
    <recommendedName>
        <fullName evidence="1">Sigma factor-binding protein Crl</fullName>
    </recommendedName>
</protein>
<comment type="function">
    <text evidence="1">Binds to the sigma-S subunit of RNA polymerase, activating expression of sigma-S-regulated genes. Stimulates RNA polymerase holoenzyme formation and may bind to several other sigma factors, such as sigma-70 and sigma-32.</text>
</comment>
<comment type="subcellular location">
    <subcellularLocation>
        <location evidence="1">Cytoplasm</location>
    </subcellularLocation>
</comment>
<comment type="similarity">
    <text evidence="1">Belongs to the Crl family.</text>
</comment>
<name>CRL_SALNS</name>
<proteinExistence type="inferred from homology"/>
<dbReference type="EMBL" id="CP001113">
    <property type="protein sequence ID" value="ACF64629.1"/>
    <property type="molecule type" value="Genomic_DNA"/>
</dbReference>
<dbReference type="RefSeq" id="WP_000174693.1">
    <property type="nucleotide sequence ID" value="NZ_CCMR01000003.1"/>
</dbReference>
<dbReference type="SMR" id="B4SVW1"/>
<dbReference type="KEGG" id="see:SNSL254_A0358"/>
<dbReference type="HOGENOM" id="CLU_136773_0_0_6"/>
<dbReference type="Proteomes" id="UP000008824">
    <property type="component" value="Chromosome"/>
</dbReference>
<dbReference type="GO" id="GO:0005737">
    <property type="term" value="C:cytoplasm"/>
    <property type="evidence" value="ECO:0007669"/>
    <property type="project" value="UniProtKB-SubCell"/>
</dbReference>
<dbReference type="GO" id="GO:0045893">
    <property type="term" value="P:positive regulation of DNA-templated transcription"/>
    <property type="evidence" value="ECO:0007669"/>
    <property type="project" value="UniProtKB-UniRule"/>
</dbReference>
<dbReference type="Gene3D" id="3.30.310.230">
    <property type="entry name" value="Sigma factor-binding protein Crl monomer"/>
    <property type="match status" value="1"/>
</dbReference>
<dbReference type="HAMAP" id="MF_01178">
    <property type="entry name" value="Crl"/>
    <property type="match status" value="1"/>
</dbReference>
<dbReference type="InterPro" id="IPR009986">
    <property type="entry name" value="Tscrpt_reg_Crl"/>
</dbReference>
<dbReference type="InterPro" id="IPR038208">
    <property type="entry name" value="Tscrpt_reg_Crl_sf"/>
</dbReference>
<dbReference type="NCBIfam" id="NF008217">
    <property type="entry name" value="PRK10984.1"/>
    <property type="match status" value="1"/>
</dbReference>
<dbReference type="Pfam" id="PF07417">
    <property type="entry name" value="Crl"/>
    <property type="match status" value="1"/>
</dbReference>